<protein>
    <recommendedName>
        <fullName>Putative uncharacterized protein FLJ46641</fullName>
    </recommendedName>
</protein>
<feature type="chain" id="PRO_0000336099" description="Putative uncharacterized protein FLJ46641">
    <location>
        <begin position="1"/>
        <end position="194"/>
    </location>
</feature>
<feature type="region of interest" description="Disordered" evidence="1">
    <location>
        <begin position="25"/>
        <end position="156"/>
    </location>
</feature>
<feature type="compositionally biased region" description="Polar residues" evidence="1">
    <location>
        <begin position="43"/>
        <end position="57"/>
    </location>
</feature>
<feature type="compositionally biased region" description="Low complexity" evidence="1">
    <location>
        <begin position="104"/>
        <end position="113"/>
    </location>
</feature>
<sequence>MGKLRPSRGRGFADVSQQIRVRNRPSWACRRGGPLGTLLANAGPSTVPVTPTAGSCQPSPLSPGGSDPPPPPRAHVSPQEAPLGQVPGAEWLPPTRGLLCKDVSSSPGPSFHLGGPGLPGHAGPCGPRARPAQGLAGRGGNVGEGSESPLGTLPCSVPASQQLLRGRSHLQGSLAALGEARGGGAAFSWGQEGP</sequence>
<organism>
    <name type="scientific">Homo sapiens</name>
    <name type="common">Human</name>
    <dbReference type="NCBI Taxonomy" id="9606"/>
    <lineage>
        <taxon>Eukaryota</taxon>
        <taxon>Metazoa</taxon>
        <taxon>Chordata</taxon>
        <taxon>Craniata</taxon>
        <taxon>Vertebrata</taxon>
        <taxon>Euteleostomi</taxon>
        <taxon>Mammalia</taxon>
        <taxon>Eutheria</taxon>
        <taxon>Euarchontoglires</taxon>
        <taxon>Primates</taxon>
        <taxon>Haplorrhini</taxon>
        <taxon>Catarrhini</taxon>
        <taxon>Hominidae</taxon>
        <taxon>Homo</taxon>
    </lineage>
</organism>
<name>YN009_HUMAN</name>
<dbReference type="EMBL" id="AK128491">
    <property type="status" value="NOT_ANNOTATED_CDS"/>
    <property type="molecule type" value="mRNA"/>
</dbReference>
<dbReference type="GlyGen" id="Q6ZR54">
    <property type="glycosylation" value="2 sites"/>
</dbReference>
<dbReference type="BioMuta" id="-"/>
<dbReference type="DMDM" id="74711059"/>
<dbReference type="jPOST" id="Q6ZR54"/>
<dbReference type="PeptideAtlas" id="Q6ZR54"/>
<dbReference type="neXtProt" id="NX_Q6ZR54"/>
<dbReference type="InParanoid" id="Q6ZR54"/>
<dbReference type="PAN-GO" id="Q6ZR54">
    <property type="GO annotations" value="0 GO annotations based on evolutionary models"/>
</dbReference>
<dbReference type="Pharos" id="Q6ZR54">
    <property type="development level" value="Tdark"/>
</dbReference>
<dbReference type="Proteomes" id="UP000005640">
    <property type="component" value="Unplaced"/>
</dbReference>
<dbReference type="RNAct" id="Q6ZR54">
    <property type="molecule type" value="protein"/>
</dbReference>
<proteinExistence type="uncertain"/>
<accession>Q6ZR54</accession>
<evidence type="ECO:0000256" key="1">
    <source>
        <dbReference type="SAM" id="MobiDB-lite"/>
    </source>
</evidence>
<evidence type="ECO:0000305" key="2"/>
<keyword id="KW-1185">Reference proteome</keyword>
<comment type="caution">
    <text evidence="2">Product of a dubious CDS prediction.</text>
</comment>
<reference key="1">
    <citation type="journal article" date="2004" name="Nat. Genet.">
        <title>Complete sequencing and characterization of 21,243 full-length human cDNAs.</title>
        <authorList>
            <person name="Ota T."/>
            <person name="Suzuki Y."/>
            <person name="Nishikawa T."/>
            <person name="Otsuki T."/>
            <person name="Sugiyama T."/>
            <person name="Irie R."/>
            <person name="Wakamatsu A."/>
            <person name="Hayashi K."/>
            <person name="Sato H."/>
            <person name="Nagai K."/>
            <person name="Kimura K."/>
            <person name="Makita H."/>
            <person name="Sekine M."/>
            <person name="Obayashi M."/>
            <person name="Nishi T."/>
            <person name="Shibahara T."/>
            <person name="Tanaka T."/>
            <person name="Ishii S."/>
            <person name="Yamamoto J."/>
            <person name="Saito K."/>
            <person name="Kawai Y."/>
            <person name="Isono Y."/>
            <person name="Nakamura Y."/>
            <person name="Nagahari K."/>
            <person name="Murakami K."/>
            <person name="Yasuda T."/>
            <person name="Iwayanagi T."/>
            <person name="Wagatsuma M."/>
            <person name="Shiratori A."/>
            <person name="Sudo H."/>
            <person name="Hosoiri T."/>
            <person name="Kaku Y."/>
            <person name="Kodaira H."/>
            <person name="Kondo H."/>
            <person name="Sugawara M."/>
            <person name="Takahashi M."/>
            <person name="Kanda K."/>
            <person name="Yokoi T."/>
            <person name="Furuya T."/>
            <person name="Kikkawa E."/>
            <person name="Omura Y."/>
            <person name="Abe K."/>
            <person name="Kamihara K."/>
            <person name="Katsuta N."/>
            <person name="Sato K."/>
            <person name="Tanikawa M."/>
            <person name="Yamazaki M."/>
            <person name="Ninomiya K."/>
            <person name="Ishibashi T."/>
            <person name="Yamashita H."/>
            <person name="Murakawa K."/>
            <person name="Fujimori K."/>
            <person name="Tanai H."/>
            <person name="Kimata M."/>
            <person name="Watanabe M."/>
            <person name="Hiraoka S."/>
            <person name="Chiba Y."/>
            <person name="Ishida S."/>
            <person name="Ono Y."/>
            <person name="Takiguchi S."/>
            <person name="Watanabe S."/>
            <person name="Yosida M."/>
            <person name="Hotuta T."/>
            <person name="Kusano J."/>
            <person name="Kanehori K."/>
            <person name="Takahashi-Fujii A."/>
            <person name="Hara H."/>
            <person name="Tanase T.-O."/>
            <person name="Nomura Y."/>
            <person name="Togiya S."/>
            <person name="Komai F."/>
            <person name="Hara R."/>
            <person name="Takeuchi K."/>
            <person name="Arita M."/>
            <person name="Imose N."/>
            <person name="Musashino K."/>
            <person name="Yuuki H."/>
            <person name="Oshima A."/>
            <person name="Sasaki N."/>
            <person name="Aotsuka S."/>
            <person name="Yoshikawa Y."/>
            <person name="Matsunawa H."/>
            <person name="Ichihara T."/>
            <person name="Shiohata N."/>
            <person name="Sano S."/>
            <person name="Moriya S."/>
            <person name="Momiyama H."/>
            <person name="Satoh N."/>
            <person name="Takami S."/>
            <person name="Terashima Y."/>
            <person name="Suzuki O."/>
            <person name="Nakagawa S."/>
            <person name="Senoh A."/>
            <person name="Mizoguchi H."/>
            <person name="Goto Y."/>
            <person name="Shimizu F."/>
            <person name="Wakebe H."/>
            <person name="Hishigaki H."/>
            <person name="Watanabe T."/>
            <person name="Sugiyama A."/>
            <person name="Takemoto M."/>
            <person name="Kawakami B."/>
            <person name="Yamazaki M."/>
            <person name="Watanabe K."/>
            <person name="Kumagai A."/>
            <person name="Itakura S."/>
            <person name="Fukuzumi Y."/>
            <person name="Fujimori Y."/>
            <person name="Komiyama M."/>
            <person name="Tashiro H."/>
            <person name="Tanigami A."/>
            <person name="Fujiwara T."/>
            <person name="Ono T."/>
            <person name="Yamada K."/>
            <person name="Fujii Y."/>
            <person name="Ozaki K."/>
            <person name="Hirao M."/>
            <person name="Ohmori Y."/>
            <person name="Kawabata A."/>
            <person name="Hikiji T."/>
            <person name="Kobatake N."/>
            <person name="Inagaki H."/>
            <person name="Ikema Y."/>
            <person name="Okamoto S."/>
            <person name="Okitani R."/>
            <person name="Kawakami T."/>
            <person name="Noguchi S."/>
            <person name="Itoh T."/>
            <person name="Shigeta K."/>
            <person name="Senba T."/>
            <person name="Matsumura K."/>
            <person name="Nakajima Y."/>
            <person name="Mizuno T."/>
            <person name="Morinaga M."/>
            <person name="Sasaki M."/>
            <person name="Togashi T."/>
            <person name="Oyama M."/>
            <person name="Hata H."/>
            <person name="Watanabe M."/>
            <person name="Komatsu T."/>
            <person name="Mizushima-Sugano J."/>
            <person name="Satoh T."/>
            <person name="Shirai Y."/>
            <person name="Takahashi Y."/>
            <person name="Nakagawa K."/>
            <person name="Okumura K."/>
            <person name="Nagase T."/>
            <person name="Nomura N."/>
            <person name="Kikuchi H."/>
            <person name="Masuho Y."/>
            <person name="Yamashita R."/>
            <person name="Nakai K."/>
            <person name="Yada T."/>
            <person name="Nakamura Y."/>
            <person name="Ohara O."/>
            <person name="Isogai T."/>
            <person name="Sugano S."/>
        </authorList>
    </citation>
    <scope>NUCLEOTIDE SEQUENCE [LARGE SCALE MRNA]</scope>
    <source>
        <tissue>Trachea</tissue>
    </source>
</reference>